<gene>
    <name evidence="1" type="primary">cutC</name>
    <name type="ordered locus">E2348C_1999</name>
</gene>
<protein>
    <recommendedName>
        <fullName evidence="1">PF03932 family protein CutC</fullName>
    </recommendedName>
</protein>
<dbReference type="EMBL" id="FM180568">
    <property type="protein sequence ID" value="CAS09547.1"/>
    <property type="molecule type" value="Genomic_DNA"/>
</dbReference>
<dbReference type="RefSeq" id="WP_001185734.1">
    <property type="nucleotide sequence ID" value="NC_011601.1"/>
</dbReference>
<dbReference type="SMR" id="B7USQ1"/>
<dbReference type="KEGG" id="ecg:E2348C_1999"/>
<dbReference type="HOGENOM" id="CLU_050555_3_1_6"/>
<dbReference type="Proteomes" id="UP000008205">
    <property type="component" value="Chromosome"/>
</dbReference>
<dbReference type="GO" id="GO:0005737">
    <property type="term" value="C:cytoplasm"/>
    <property type="evidence" value="ECO:0007669"/>
    <property type="project" value="UniProtKB-SubCell"/>
</dbReference>
<dbReference type="GO" id="GO:0005507">
    <property type="term" value="F:copper ion binding"/>
    <property type="evidence" value="ECO:0007669"/>
    <property type="project" value="TreeGrafter"/>
</dbReference>
<dbReference type="FunFam" id="3.20.20.380:FF:000001">
    <property type="entry name" value="Copper homeostasis protein CutC"/>
    <property type="match status" value="1"/>
</dbReference>
<dbReference type="Gene3D" id="3.20.20.380">
    <property type="entry name" value="Copper homeostasis (CutC) domain"/>
    <property type="match status" value="1"/>
</dbReference>
<dbReference type="HAMAP" id="MF_00795">
    <property type="entry name" value="CutC"/>
    <property type="match status" value="1"/>
</dbReference>
<dbReference type="InterPro" id="IPR005627">
    <property type="entry name" value="CutC-like"/>
</dbReference>
<dbReference type="InterPro" id="IPR036822">
    <property type="entry name" value="CutC-like_dom_sf"/>
</dbReference>
<dbReference type="NCBIfam" id="NF008603">
    <property type="entry name" value="PRK11572.1"/>
    <property type="match status" value="1"/>
</dbReference>
<dbReference type="PANTHER" id="PTHR12598">
    <property type="entry name" value="COPPER HOMEOSTASIS PROTEIN CUTC"/>
    <property type="match status" value="1"/>
</dbReference>
<dbReference type="PANTHER" id="PTHR12598:SF0">
    <property type="entry name" value="COPPER HOMEOSTASIS PROTEIN CUTC HOMOLOG"/>
    <property type="match status" value="1"/>
</dbReference>
<dbReference type="Pfam" id="PF03932">
    <property type="entry name" value="CutC"/>
    <property type="match status" value="1"/>
</dbReference>
<dbReference type="SUPFAM" id="SSF110395">
    <property type="entry name" value="CutC-like"/>
    <property type="match status" value="1"/>
</dbReference>
<keyword id="KW-0963">Cytoplasm</keyword>
<keyword id="KW-1185">Reference proteome</keyword>
<accession>B7USQ1</accession>
<evidence type="ECO:0000255" key="1">
    <source>
        <dbReference type="HAMAP-Rule" id="MF_00795"/>
    </source>
</evidence>
<organism>
    <name type="scientific">Escherichia coli O127:H6 (strain E2348/69 / EPEC)</name>
    <dbReference type="NCBI Taxonomy" id="574521"/>
    <lineage>
        <taxon>Bacteria</taxon>
        <taxon>Pseudomonadati</taxon>
        <taxon>Pseudomonadota</taxon>
        <taxon>Gammaproteobacteria</taxon>
        <taxon>Enterobacterales</taxon>
        <taxon>Enterobacteriaceae</taxon>
        <taxon>Escherichia</taxon>
    </lineage>
</organism>
<name>CUTC_ECO27</name>
<feature type="chain" id="PRO_1000148514" description="PF03932 family protein CutC">
    <location>
        <begin position="1"/>
        <end position="248"/>
    </location>
</feature>
<comment type="subunit">
    <text evidence="1">Homodimer.</text>
</comment>
<comment type="subcellular location">
    <subcellularLocation>
        <location evidence="1">Cytoplasm</location>
    </subcellularLocation>
</comment>
<comment type="similarity">
    <text evidence="1">Belongs to the CutC family.</text>
</comment>
<comment type="caution">
    <text evidence="1">Once thought to be involved in copper homeostasis, experiments in E.coli have shown this is not the case.</text>
</comment>
<reference key="1">
    <citation type="journal article" date="2009" name="J. Bacteriol.">
        <title>Complete genome sequence and comparative genome analysis of enteropathogenic Escherichia coli O127:H6 strain E2348/69.</title>
        <authorList>
            <person name="Iguchi A."/>
            <person name="Thomson N.R."/>
            <person name="Ogura Y."/>
            <person name="Saunders D."/>
            <person name="Ooka T."/>
            <person name="Henderson I.R."/>
            <person name="Harris D."/>
            <person name="Asadulghani M."/>
            <person name="Kurokawa K."/>
            <person name="Dean P."/>
            <person name="Kenny B."/>
            <person name="Quail M.A."/>
            <person name="Thurston S."/>
            <person name="Dougan G."/>
            <person name="Hayashi T."/>
            <person name="Parkhill J."/>
            <person name="Frankel G."/>
        </authorList>
    </citation>
    <scope>NUCLEOTIDE SEQUENCE [LARGE SCALE GENOMIC DNA]</scope>
    <source>
        <strain>E2348/69 / EPEC</strain>
    </source>
</reference>
<proteinExistence type="inferred from homology"/>
<sequence length="248" mass="26671">MALLEICCYSMECALTAQQNGADRVELCAAPKEGGLTPSLGVLKSVRQRVTIPVHPIIRPRGGDFCYSDGEFAAILEDVRTVRELGFPGLVTGVLDVDGNVDMPRMEKIMAAAGPLAVTFHRAFDMCANPLNTLNNLTELGIARVLTSGQKSDALQGLSKIMELIAHRDAPIIMAGAGVRAENLHHFLDAGVLEVHSSAGAWQASPMRYRNQGLSMSSDAHADEYSRYVVDGAAVAEMKGIIERHQAK</sequence>